<accession>A5PJA8</accession>
<keyword id="KW-0256">Endoplasmic reticulum</keyword>
<keyword id="KW-0472">Membrane</keyword>
<keyword id="KW-1185">Reference proteome</keyword>
<keyword id="KW-0732">Signal</keyword>
<keyword id="KW-0812">Transmembrane</keyword>
<keyword id="KW-1133">Transmembrane helix</keyword>
<comment type="function">
    <text evidence="1">Part of the endoplasmic reticulum membrane protein complex (EMC) that enables the energy-independent insertion into endoplasmic reticulum membranes of newly synthesized membrane proteins. Preferentially accommodates proteins with transmembrane domains that are weakly hydrophobic or contain destabilizing features such as charged and aromatic residues. Involved in the cotranslational insertion of multi-pass membrane proteins in which stop-transfer membrane-anchor sequences become ER membrane spanning helices. It is also required for the post-translational insertion of tail-anchored/TA proteins in endoplasmic reticulum membranes. By mediating the proper cotranslational insertion of N-terminal transmembrane domains in an N-exo topology, with translocated N-terminus in the lumen of the ER, controls the topology of multi-pass membrane proteins like the G protein-coupled receptors. By regulating the insertion of various proteins in membranes, it is indirectly involved in many cellular processes.</text>
</comment>
<comment type="subunit">
    <text evidence="1">Component of the ER membrane protein complex (EMC).</text>
</comment>
<comment type="subcellular location">
    <subcellularLocation>
        <location evidence="1">Endoplasmic reticulum membrane</location>
        <topology evidence="1">Single-pass type I membrane protein</topology>
    </subcellularLocation>
</comment>
<comment type="similarity">
    <text evidence="4">Belongs to the EMC7 family.</text>
</comment>
<proteinExistence type="evidence at transcript level"/>
<dbReference type="EMBL" id="BC142029">
    <property type="protein sequence ID" value="AAI42030.1"/>
    <property type="molecule type" value="mRNA"/>
</dbReference>
<dbReference type="RefSeq" id="NP_001092613.1">
    <property type="nucleotide sequence ID" value="NM_001099143.2"/>
</dbReference>
<dbReference type="SMR" id="A5PJA8"/>
<dbReference type="FunCoup" id="A5PJA8">
    <property type="interactions" value="3389"/>
</dbReference>
<dbReference type="STRING" id="9913.ENSBTAP00000009709"/>
<dbReference type="PaxDb" id="9913-ENSBTAP00000009709"/>
<dbReference type="GeneID" id="615423"/>
<dbReference type="KEGG" id="bta:615423"/>
<dbReference type="CTD" id="56851"/>
<dbReference type="eggNOG" id="KOG3306">
    <property type="taxonomic scope" value="Eukaryota"/>
</dbReference>
<dbReference type="InParanoid" id="A5PJA8"/>
<dbReference type="OrthoDB" id="27095at2759"/>
<dbReference type="Proteomes" id="UP000009136">
    <property type="component" value="Unplaced"/>
</dbReference>
<dbReference type="GO" id="GO:0072546">
    <property type="term" value="C:EMC complex"/>
    <property type="evidence" value="ECO:0000250"/>
    <property type="project" value="UniProtKB"/>
</dbReference>
<dbReference type="GO" id="GO:0005789">
    <property type="term" value="C:endoplasmic reticulum membrane"/>
    <property type="evidence" value="ECO:0000250"/>
    <property type="project" value="UniProtKB"/>
</dbReference>
<dbReference type="GO" id="GO:0016020">
    <property type="term" value="C:membrane"/>
    <property type="evidence" value="ECO:0000250"/>
    <property type="project" value="UniProtKB"/>
</dbReference>
<dbReference type="GO" id="GO:0030246">
    <property type="term" value="F:carbohydrate binding"/>
    <property type="evidence" value="ECO:0007669"/>
    <property type="project" value="InterPro"/>
</dbReference>
<dbReference type="GO" id="GO:0045050">
    <property type="term" value="P:protein insertion into ER membrane by stop-transfer membrane-anchor sequence"/>
    <property type="evidence" value="ECO:0000250"/>
    <property type="project" value="UniProtKB"/>
</dbReference>
<dbReference type="GO" id="GO:0071816">
    <property type="term" value="P:tail-anchored membrane protein insertion into ER membrane"/>
    <property type="evidence" value="ECO:0000250"/>
    <property type="project" value="UniProtKB"/>
</dbReference>
<dbReference type="InterPro" id="IPR013784">
    <property type="entry name" value="Carb-bd-like_fold"/>
</dbReference>
<dbReference type="InterPro" id="IPR039163">
    <property type="entry name" value="EMC7"/>
</dbReference>
<dbReference type="InterPro" id="IPR019008">
    <property type="entry name" value="EMC7_beta_sandwich"/>
</dbReference>
<dbReference type="PANTHER" id="PTHR13605">
    <property type="entry name" value="ER MEMBRANE PROTEIN COMPLEX SUBUNIT 7"/>
    <property type="match status" value="1"/>
</dbReference>
<dbReference type="PANTHER" id="PTHR13605:SF4">
    <property type="entry name" value="ER MEMBRANE PROTEIN COMPLEX SUBUNIT 7"/>
    <property type="match status" value="1"/>
</dbReference>
<dbReference type="Pfam" id="PF09430">
    <property type="entry name" value="EMC7_beta-sandw"/>
    <property type="match status" value="1"/>
</dbReference>
<dbReference type="SUPFAM" id="SSF49452">
    <property type="entry name" value="Starch-binding domain-like"/>
    <property type="match status" value="1"/>
</dbReference>
<feature type="signal peptide" evidence="1">
    <location>
        <begin position="1"/>
        <end position="22"/>
    </location>
</feature>
<feature type="chain" id="PRO_0000300093" description="Endoplasmic reticulum membrane protein complex subunit 7">
    <location>
        <begin position="23"/>
        <end position="241"/>
    </location>
</feature>
<feature type="topological domain" description="Lumenal" evidence="1">
    <location>
        <begin position="23"/>
        <end position="158"/>
    </location>
</feature>
<feature type="transmembrane region" description="Helical" evidence="2">
    <location>
        <begin position="159"/>
        <end position="179"/>
    </location>
</feature>
<feature type="topological domain" description="Cytoplasmic" evidence="1">
    <location>
        <begin position="180"/>
        <end position="241"/>
    </location>
</feature>
<feature type="region of interest" description="Disordered" evidence="3">
    <location>
        <begin position="217"/>
        <end position="241"/>
    </location>
</feature>
<feature type="compositionally biased region" description="Low complexity" evidence="3">
    <location>
        <begin position="218"/>
        <end position="234"/>
    </location>
</feature>
<organism>
    <name type="scientific">Bos taurus</name>
    <name type="common">Bovine</name>
    <dbReference type="NCBI Taxonomy" id="9913"/>
    <lineage>
        <taxon>Eukaryota</taxon>
        <taxon>Metazoa</taxon>
        <taxon>Chordata</taxon>
        <taxon>Craniata</taxon>
        <taxon>Vertebrata</taxon>
        <taxon>Euteleostomi</taxon>
        <taxon>Mammalia</taxon>
        <taxon>Eutheria</taxon>
        <taxon>Laurasiatheria</taxon>
        <taxon>Artiodactyla</taxon>
        <taxon>Ruminantia</taxon>
        <taxon>Pecora</taxon>
        <taxon>Bovidae</taxon>
        <taxon>Bovinae</taxon>
        <taxon>Bos</taxon>
    </lineage>
</organism>
<reference key="1">
    <citation type="submission" date="2007-06" db="EMBL/GenBank/DDBJ databases">
        <authorList>
            <consortium name="NIH - Mammalian Gene Collection (MGC) project"/>
        </authorList>
    </citation>
    <scope>NUCLEOTIDE SEQUENCE [LARGE SCALE MRNA]</scope>
    <source>
        <strain>Hereford</strain>
        <tissue>Fetal pons</tissue>
    </source>
</reference>
<protein>
    <recommendedName>
        <fullName>Endoplasmic reticulum membrane protein complex subunit 7</fullName>
    </recommendedName>
    <alternativeName>
        <fullName>ER membrane protein complex subunit 7</fullName>
    </alternativeName>
</protein>
<evidence type="ECO:0000250" key="1">
    <source>
        <dbReference type="UniProtKB" id="Q9NPA0"/>
    </source>
</evidence>
<evidence type="ECO:0000255" key="2"/>
<evidence type="ECO:0000256" key="3">
    <source>
        <dbReference type="SAM" id="MobiDB-lite"/>
    </source>
</evidence>
<evidence type="ECO:0000305" key="4"/>
<gene>
    <name type="primary">EMC7</name>
</gene>
<name>EMC7_BOVIN</name>
<sequence length="241" mass="26560">MAATLWAFFSVLLLLLSRDAQSSEVSGSTSDGSGGSGVGTGDRFKIEGRAVVPGVKPQDWISAARVLVDGEEHVGFLKTDGSFVVHDIPSGSYVVEVISPAYRFDPVRVDITSKGKMRARYVNYIKTSEVVRLPYPLQMKSSGPPSYFIKRESWGWTDFLMNPMVMMMVLPLLIFVLLPKVVNTSDPDMRREMEQSMNMLNSNHELPDVSEFMTRLFSSKSSDKSSSGSSKTGKSGAGKRR</sequence>